<reference key="1">
    <citation type="journal article" date="1999" name="Nature">
        <title>Sequence and analysis of chromosome 4 of the plant Arabidopsis thaliana.</title>
        <authorList>
            <person name="Mayer K.F.X."/>
            <person name="Schueller C."/>
            <person name="Wambutt R."/>
            <person name="Murphy G."/>
            <person name="Volckaert G."/>
            <person name="Pohl T."/>
            <person name="Duesterhoeft A."/>
            <person name="Stiekema W."/>
            <person name="Entian K.-D."/>
            <person name="Terryn N."/>
            <person name="Harris B."/>
            <person name="Ansorge W."/>
            <person name="Brandt P."/>
            <person name="Grivell L.A."/>
            <person name="Rieger M."/>
            <person name="Weichselgartner M."/>
            <person name="de Simone V."/>
            <person name="Obermaier B."/>
            <person name="Mache R."/>
            <person name="Mueller M."/>
            <person name="Kreis M."/>
            <person name="Delseny M."/>
            <person name="Puigdomenech P."/>
            <person name="Watson M."/>
            <person name="Schmidtheini T."/>
            <person name="Reichert B."/>
            <person name="Portetelle D."/>
            <person name="Perez-Alonso M."/>
            <person name="Boutry M."/>
            <person name="Bancroft I."/>
            <person name="Vos P."/>
            <person name="Hoheisel J."/>
            <person name="Zimmermann W."/>
            <person name="Wedler H."/>
            <person name="Ridley P."/>
            <person name="Langham S.-A."/>
            <person name="McCullagh B."/>
            <person name="Bilham L."/>
            <person name="Robben J."/>
            <person name="van der Schueren J."/>
            <person name="Grymonprez B."/>
            <person name="Chuang Y.-J."/>
            <person name="Vandenbussche F."/>
            <person name="Braeken M."/>
            <person name="Weltjens I."/>
            <person name="Voet M."/>
            <person name="Bastiaens I."/>
            <person name="Aert R."/>
            <person name="Defoor E."/>
            <person name="Weitzenegger T."/>
            <person name="Bothe G."/>
            <person name="Ramsperger U."/>
            <person name="Hilbert H."/>
            <person name="Braun M."/>
            <person name="Holzer E."/>
            <person name="Brandt A."/>
            <person name="Peters S."/>
            <person name="van Staveren M."/>
            <person name="Dirkse W."/>
            <person name="Mooijman P."/>
            <person name="Klein Lankhorst R."/>
            <person name="Rose M."/>
            <person name="Hauf J."/>
            <person name="Koetter P."/>
            <person name="Berneiser S."/>
            <person name="Hempel S."/>
            <person name="Feldpausch M."/>
            <person name="Lamberth S."/>
            <person name="Van den Daele H."/>
            <person name="De Keyser A."/>
            <person name="Buysshaert C."/>
            <person name="Gielen J."/>
            <person name="Villarroel R."/>
            <person name="De Clercq R."/>
            <person name="van Montagu M."/>
            <person name="Rogers J."/>
            <person name="Cronin A."/>
            <person name="Quail M.A."/>
            <person name="Bray-Allen S."/>
            <person name="Clark L."/>
            <person name="Doggett J."/>
            <person name="Hall S."/>
            <person name="Kay M."/>
            <person name="Lennard N."/>
            <person name="McLay K."/>
            <person name="Mayes R."/>
            <person name="Pettett A."/>
            <person name="Rajandream M.A."/>
            <person name="Lyne M."/>
            <person name="Benes V."/>
            <person name="Rechmann S."/>
            <person name="Borkova D."/>
            <person name="Bloecker H."/>
            <person name="Scharfe M."/>
            <person name="Grimm M."/>
            <person name="Loehnert T.-H."/>
            <person name="Dose S."/>
            <person name="de Haan M."/>
            <person name="Maarse A.C."/>
            <person name="Schaefer M."/>
            <person name="Mueller-Auer S."/>
            <person name="Gabel C."/>
            <person name="Fuchs M."/>
            <person name="Fartmann B."/>
            <person name="Granderath K."/>
            <person name="Dauner D."/>
            <person name="Herzl A."/>
            <person name="Neumann S."/>
            <person name="Argiriou A."/>
            <person name="Vitale D."/>
            <person name="Liguori R."/>
            <person name="Piravandi E."/>
            <person name="Massenet O."/>
            <person name="Quigley F."/>
            <person name="Clabauld G."/>
            <person name="Muendlein A."/>
            <person name="Felber R."/>
            <person name="Schnabl S."/>
            <person name="Hiller R."/>
            <person name="Schmidt W."/>
            <person name="Lecharny A."/>
            <person name="Aubourg S."/>
            <person name="Chefdor F."/>
            <person name="Cooke R."/>
            <person name="Berger C."/>
            <person name="Monfort A."/>
            <person name="Casacuberta E."/>
            <person name="Gibbons T."/>
            <person name="Weber N."/>
            <person name="Vandenbol M."/>
            <person name="Bargues M."/>
            <person name="Terol J."/>
            <person name="Torres A."/>
            <person name="Perez-Perez A."/>
            <person name="Purnelle B."/>
            <person name="Bent E."/>
            <person name="Johnson S."/>
            <person name="Tacon D."/>
            <person name="Jesse T."/>
            <person name="Heijnen L."/>
            <person name="Schwarz S."/>
            <person name="Scholler P."/>
            <person name="Heber S."/>
            <person name="Francs P."/>
            <person name="Bielke C."/>
            <person name="Frishman D."/>
            <person name="Haase D."/>
            <person name="Lemcke K."/>
            <person name="Mewes H.-W."/>
            <person name="Stocker S."/>
            <person name="Zaccaria P."/>
            <person name="Bevan M."/>
            <person name="Wilson R.K."/>
            <person name="de la Bastide M."/>
            <person name="Habermann K."/>
            <person name="Parnell L."/>
            <person name="Dedhia N."/>
            <person name="Gnoj L."/>
            <person name="Schutz K."/>
            <person name="Huang E."/>
            <person name="Spiegel L."/>
            <person name="Sekhon M."/>
            <person name="Murray J."/>
            <person name="Sheet P."/>
            <person name="Cordes M."/>
            <person name="Abu-Threideh J."/>
            <person name="Stoneking T."/>
            <person name="Kalicki J."/>
            <person name="Graves T."/>
            <person name="Harmon G."/>
            <person name="Edwards J."/>
            <person name="Latreille P."/>
            <person name="Courtney L."/>
            <person name="Cloud J."/>
            <person name="Abbott A."/>
            <person name="Scott K."/>
            <person name="Johnson D."/>
            <person name="Minx P."/>
            <person name="Bentley D."/>
            <person name="Fulton B."/>
            <person name="Miller N."/>
            <person name="Greco T."/>
            <person name="Kemp K."/>
            <person name="Kramer J."/>
            <person name="Fulton L."/>
            <person name="Mardis E."/>
            <person name="Dante M."/>
            <person name="Pepin K."/>
            <person name="Hillier L.W."/>
            <person name="Nelson J."/>
            <person name="Spieth J."/>
            <person name="Ryan E."/>
            <person name="Andrews S."/>
            <person name="Geisel C."/>
            <person name="Layman D."/>
            <person name="Du H."/>
            <person name="Ali J."/>
            <person name="Berghoff A."/>
            <person name="Jones K."/>
            <person name="Drone K."/>
            <person name="Cotton M."/>
            <person name="Joshu C."/>
            <person name="Antonoiu B."/>
            <person name="Zidanic M."/>
            <person name="Strong C."/>
            <person name="Sun H."/>
            <person name="Lamar B."/>
            <person name="Yordan C."/>
            <person name="Ma P."/>
            <person name="Zhong J."/>
            <person name="Preston R."/>
            <person name="Vil D."/>
            <person name="Shekher M."/>
            <person name="Matero A."/>
            <person name="Shah R."/>
            <person name="Swaby I.K."/>
            <person name="O'Shaughnessy A."/>
            <person name="Rodriguez M."/>
            <person name="Hoffman J."/>
            <person name="Till S."/>
            <person name="Granat S."/>
            <person name="Shohdy N."/>
            <person name="Hasegawa A."/>
            <person name="Hameed A."/>
            <person name="Lodhi M."/>
            <person name="Johnson A."/>
            <person name="Chen E."/>
            <person name="Marra M.A."/>
            <person name="Martienssen R."/>
            <person name="McCombie W.R."/>
        </authorList>
    </citation>
    <scope>NUCLEOTIDE SEQUENCE [LARGE SCALE GENOMIC DNA]</scope>
    <source>
        <strain>cv. Columbia</strain>
    </source>
</reference>
<reference key="2">
    <citation type="journal article" date="2017" name="Plant J.">
        <title>Araport11: a complete reannotation of the Arabidopsis thaliana reference genome.</title>
        <authorList>
            <person name="Cheng C.Y."/>
            <person name="Krishnakumar V."/>
            <person name="Chan A.P."/>
            <person name="Thibaud-Nissen F."/>
            <person name="Schobel S."/>
            <person name="Town C.D."/>
        </authorList>
    </citation>
    <scope>GENOME REANNOTATION</scope>
    <source>
        <strain>cv. Columbia</strain>
    </source>
</reference>
<reference key="3">
    <citation type="journal article" date="2003" name="Science">
        <title>Empirical analysis of transcriptional activity in the Arabidopsis genome.</title>
        <authorList>
            <person name="Yamada K."/>
            <person name="Lim J."/>
            <person name="Dale J.M."/>
            <person name="Chen H."/>
            <person name="Shinn P."/>
            <person name="Palm C.J."/>
            <person name="Southwick A.M."/>
            <person name="Wu H.C."/>
            <person name="Kim C.J."/>
            <person name="Nguyen M."/>
            <person name="Pham P.K."/>
            <person name="Cheuk R.F."/>
            <person name="Karlin-Newmann G."/>
            <person name="Liu S.X."/>
            <person name="Lam B."/>
            <person name="Sakano H."/>
            <person name="Wu T."/>
            <person name="Yu G."/>
            <person name="Miranda M."/>
            <person name="Quach H.L."/>
            <person name="Tripp M."/>
            <person name="Chang C.H."/>
            <person name="Lee J.M."/>
            <person name="Toriumi M.J."/>
            <person name="Chan M.M."/>
            <person name="Tang C.C."/>
            <person name="Onodera C.S."/>
            <person name="Deng J.M."/>
            <person name="Akiyama K."/>
            <person name="Ansari Y."/>
            <person name="Arakawa T."/>
            <person name="Banh J."/>
            <person name="Banno F."/>
            <person name="Bowser L."/>
            <person name="Brooks S.Y."/>
            <person name="Carninci P."/>
            <person name="Chao Q."/>
            <person name="Choy N."/>
            <person name="Enju A."/>
            <person name="Goldsmith A.D."/>
            <person name="Gurjal M."/>
            <person name="Hansen N.F."/>
            <person name="Hayashizaki Y."/>
            <person name="Johnson-Hopson C."/>
            <person name="Hsuan V.W."/>
            <person name="Iida K."/>
            <person name="Karnes M."/>
            <person name="Khan S."/>
            <person name="Koesema E."/>
            <person name="Ishida J."/>
            <person name="Jiang P.X."/>
            <person name="Jones T."/>
            <person name="Kawai J."/>
            <person name="Kamiya A."/>
            <person name="Meyers C."/>
            <person name="Nakajima M."/>
            <person name="Narusaka M."/>
            <person name="Seki M."/>
            <person name="Sakurai T."/>
            <person name="Satou M."/>
            <person name="Tamse R."/>
            <person name="Vaysberg M."/>
            <person name="Wallender E.K."/>
            <person name="Wong C."/>
            <person name="Yamamura Y."/>
            <person name="Yuan S."/>
            <person name="Shinozaki K."/>
            <person name="Davis R.W."/>
            <person name="Theologis A."/>
            <person name="Ecker J.R."/>
        </authorList>
    </citation>
    <scope>NUCLEOTIDE SEQUENCE [LARGE SCALE MRNA]</scope>
    <source>
        <strain>cv. Columbia</strain>
    </source>
</reference>
<reference key="4">
    <citation type="submission" date="2006-07" db="EMBL/GenBank/DDBJ databases">
        <title>Large-scale analysis of RIKEN Arabidopsis full-length (RAFL) cDNAs.</title>
        <authorList>
            <person name="Totoki Y."/>
            <person name="Seki M."/>
            <person name="Ishida J."/>
            <person name="Nakajima M."/>
            <person name="Enju A."/>
            <person name="Kamiya A."/>
            <person name="Narusaka M."/>
            <person name="Shin-i T."/>
            <person name="Nakagawa M."/>
            <person name="Sakamoto N."/>
            <person name="Oishi K."/>
            <person name="Kohara Y."/>
            <person name="Kobayashi M."/>
            <person name="Toyoda A."/>
            <person name="Sakaki Y."/>
            <person name="Sakurai T."/>
            <person name="Iida K."/>
            <person name="Akiyama K."/>
            <person name="Satou M."/>
            <person name="Toyoda T."/>
            <person name="Konagaya A."/>
            <person name="Carninci P."/>
            <person name="Kawai J."/>
            <person name="Hayashizaki Y."/>
            <person name="Shinozaki K."/>
        </authorList>
    </citation>
    <scope>NUCLEOTIDE SEQUENCE [LARGE SCALE MRNA]</scope>
    <source>
        <strain>cv. Columbia</strain>
    </source>
</reference>
<reference key="5">
    <citation type="journal article" date="2001" name="J. Biol. Chem.">
        <title>The Arabidopsis thaliana ABC protein superfamily, a complete inventory.</title>
        <authorList>
            <person name="Sanchez-Fernandez R."/>
            <person name="Davies T.G."/>
            <person name="Coleman J.O."/>
            <person name="Rea P.A."/>
        </authorList>
    </citation>
    <scope>GENE FAMILY</scope>
    <scope>NOMENCLATURE</scope>
</reference>
<reference key="6">
    <citation type="journal article" date="2002" name="Planta">
        <title>Multifunctionality of plant ABC transporters -- more than just detoxifiers.</title>
        <authorList>
            <person name="Martinoia E."/>
            <person name="Klein M."/>
            <person name="Geisler M."/>
            <person name="Bovet L."/>
            <person name="Forestier C."/>
            <person name="Kolukisaoglu H.U."/>
            <person name="Mueller-Roeber B."/>
            <person name="Schulz B."/>
        </authorList>
    </citation>
    <scope>GENE FAMILY</scope>
</reference>
<reference key="7">
    <citation type="journal article" date="2004" name="J. Mol. Evol.">
        <title>A plant orthologue of RNase L inhibitor (RLI) is induced in plants showing RNA interference.</title>
        <authorList>
            <person name="Braz A.S.K."/>
            <person name="Finnegan J."/>
            <person name="Waterhouse P."/>
            <person name="Margis R."/>
        </authorList>
    </citation>
    <scope>INDUCTION</scope>
    <scope>TISSUE SPECIFICITY</scope>
</reference>
<reference key="8">
    <citation type="journal article" date="2008" name="Trends Plant Sci.">
        <title>Plant ABC proteins - a unified nomenclature and updated inventory.</title>
        <authorList>
            <person name="Verrier P.J."/>
            <person name="Bird D."/>
            <person name="Burla B."/>
            <person name="Dassa E."/>
            <person name="Forestier C."/>
            <person name="Geisler M."/>
            <person name="Klein M."/>
            <person name="Kolukisaoglu H.U."/>
            <person name="Lee Y."/>
            <person name="Martinoia E."/>
            <person name="Murphy A."/>
            <person name="Rea P.A."/>
            <person name="Samuels L."/>
            <person name="Schulz B."/>
            <person name="Spalding E.J."/>
            <person name="Yazaki K."/>
            <person name="Theodoulou F.L."/>
        </authorList>
    </citation>
    <scope>GENE FAMILY</scope>
    <scope>NOMENCLATURE</scope>
</reference>
<proteinExistence type="evidence at transcript level"/>
<feature type="chain" id="PRO_0000379138" description="ABC transporter E family member 2">
    <location>
        <begin position="1"/>
        <end position="605"/>
    </location>
</feature>
<feature type="domain" description="4Fe-4S ferredoxin-type" evidence="2">
    <location>
        <begin position="46"/>
        <end position="75"/>
    </location>
</feature>
<feature type="domain" description="ABC transporter 1" evidence="1">
    <location>
        <begin position="70"/>
        <end position="315"/>
    </location>
</feature>
<feature type="domain" description="ABC transporter 2" evidence="1">
    <location>
        <begin position="344"/>
        <end position="568"/>
    </location>
</feature>
<feature type="binding site" evidence="1">
    <location>
        <begin position="110"/>
        <end position="117"/>
    </location>
    <ligand>
        <name>ATP</name>
        <dbReference type="ChEBI" id="CHEBI:30616"/>
    </ligand>
</feature>
<feature type="binding site" evidence="1">
    <location>
        <begin position="381"/>
        <end position="388"/>
    </location>
    <ligand>
        <name>ATP</name>
        <dbReference type="ChEBI" id="CHEBI:30616"/>
    </ligand>
</feature>
<dbReference type="EMBL" id="AL021687">
    <property type="protein sequence ID" value="CAA16710.1"/>
    <property type="status" value="ALT_SEQ"/>
    <property type="molecule type" value="Genomic_DNA"/>
</dbReference>
<dbReference type="EMBL" id="AL161550">
    <property type="protein sequence ID" value="CAB78923.1"/>
    <property type="status" value="ALT_SEQ"/>
    <property type="molecule type" value="Genomic_DNA"/>
</dbReference>
<dbReference type="EMBL" id="CP002687">
    <property type="protein sequence ID" value="AEE84160.1"/>
    <property type="molecule type" value="Genomic_DNA"/>
</dbReference>
<dbReference type="EMBL" id="AY099697">
    <property type="protein sequence ID" value="AAM20548.1"/>
    <property type="molecule type" value="mRNA"/>
</dbReference>
<dbReference type="EMBL" id="BT000298">
    <property type="protein sequence ID" value="AAN15617.1"/>
    <property type="molecule type" value="mRNA"/>
</dbReference>
<dbReference type="EMBL" id="AK221885">
    <property type="protein sequence ID" value="BAD94217.1"/>
    <property type="molecule type" value="mRNA"/>
</dbReference>
<dbReference type="EMBL" id="AK226939">
    <property type="protein sequence ID" value="BAE99009.1"/>
    <property type="molecule type" value="mRNA"/>
</dbReference>
<dbReference type="PIR" id="T04442">
    <property type="entry name" value="T04442"/>
</dbReference>
<dbReference type="RefSeq" id="NP_193656.2">
    <property type="nucleotide sequence ID" value="NM_118041.5"/>
</dbReference>
<dbReference type="SMR" id="Q8LPJ4"/>
<dbReference type="BioGRID" id="12954">
    <property type="interactions" value="9"/>
</dbReference>
<dbReference type="FunCoup" id="Q8LPJ4">
    <property type="interactions" value="4740"/>
</dbReference>
<dbReference type="IntAct" id="Q8LPJ4">
    <property type="interactions" value="10"/>
</dbReference>
<dbReference type="STRING" id="3702.Q8LPJ4"/>
<dbReference type="iPTMnet" id="Q8LPJ4"/>
<dbReference type="PaxDb" id="3702-AT4G19210.1"/>
<dbReference type="ProteomicsDB" id="245118"/>
<dbReference type="EnsemblPlants" id="AT4G19210.1">
    <property type="protein sequence ID" value="AT4G19210.1"/>
    <property type="gene ID" value="AT4G19210"/>
</dbReference>
<dbReference type="GeneID" id="827661"/>
<dbReference type="Gramene" id="AT4G19210.1">
    <property type="protein sequence ID" value="AT4G19210.1"/>
    <property type="gene ID" value="AT4G19210"/>
</dbReference>
<dbReference type="KEGG" id="ath:AT4G19210"/>
<dbReference type="Araport" id="AT4G19210"/>
<dbReference type="TAIR" id="AT4G19210">
    <property type="gene designation" value="ABCE2"/>
</dbReference>
<dbReference type="eggNOG" id="KOG0063">
    <property type="taxonomic scope" value="Eukaryota"/>
</dbReference>
<dbReference type="HOGENOM" id="CLU_017344_4_1_1"/>
<dbReference type="InParanoid" id="Q8LPJ4"/>
<dbReference type="OMA" id="MVCIQNG"/>
<dbReference type="OrthoDB" id="1063157at2759"/>
<dbReference type="PhylomeDB" id="Q8LPJ4"/>
<dbReference type="PRO" id="PR:Q8LPJ4"/>
<dbReference type="Proteomes" id="UP000006548">
    <property type="component" value="Chromosome 4"/>
</dbReference>
<dbReference type="ExpressionAtlas" id="Q8LPJ4">
    <property type="expression patterns" value="baseline and differential"/>
</dbReference>
<dbReference type="GO" id="GO:0005829">
    <property type="term" value="C:cytosol"/>
    <property type="evidence" value="ECO:0007005"/>
    <property type="project" value="TAIR"/>
</dbReference>
<dbReference type="GO" id="GO:0016020">
    <property type="term" value="C:membrane"/>
    <property type="evidence" value="ECO:0007669"/>
    <property type="project" value="UniProtKB-SubCell"/>
</dbReference>
<dbReference type="GO" id="GO:0051539">
    <property type="term" value="F:4 iron, 4 sulfur cluster binding"/>
    <property type="evidence" value="ECO:0007669"/>
    <property type="project" value="UniProtKB-KW"/>
</dbReference>
<dbReference type="GO" id="GO:0005524">
    <property type="term" value="F:ATP binding"/>
    <property type="evidence" value="ECO:0007669"/>
    <property type="project" value="UniProtKB-KW"/>
</dbReference>
<dbReference type="GO" id="GO:0016887">
    <property type="term" value="F:ATP hydrolysis activity"/>
    <property type="evidence" value="ECO:0007669"/>
    <property type="project" value="InterPro"/>
</dbReference>
<dbReference type="GO" id="GO:0046872">
    <property type="term" value="F:metal ion binding"/>
    <property type="evidence" value="ECO:0007669"/>
    <property type="project" value="UniProtKB-KW"/>
</dbReference>
<dbReference type="CDD" id="cd03236">
    <property type="entry name" value="ABC_RNaseL_inhibitor_domain1"/>
    <property type="match status" value="1"/>
</dbReference>
<dbReference type="CDD" id="cd03237">
    <property type="entry name" value="ABC_RNaseL_inhibitor_domain2"/>
    <property type="match status" value="1"/>
</dbReference>
<dbReference type="FunFam" id="3.40.50.300:FF:000144">
    <property type="entry name" value="ATP-binding cassette sub-family E member 1"/>
    <property type="match status" value="1"/>
</dbReference>
<dbReference type="FunFam" id="3.40.50.300:FF:000152">
    <property type="entry name" value="ATP-binding cassette, sub-family E, member 1"/>
    <property type="match status" value="1"/>
</dbReference>
<dbReference type="Gene3D" id="3.40.50.300">
    <property type="entry name" value="P-loop containing nucleotide triphosphate hydrolases"/>
    <property type="match status" value="2"/>
</dbReference>
<dbReference type="InterPro" id="IPR017896">
    <property type="entry name" value="4Fe4S_Fe-S-bd"/>
</dbReference>
<dbReference type="InterPro" id="IPR017900">
    <property type="entry name" value="4Fe4S_Fe_S_CS"/>
</dbReference>
<dbReference type="InterPro" id="IPR003593">
    <property type="entry name" value="AAA+_ATPase"/>
</dbReference>
<dbReference type="InterPro" id="IPR003439">
    <property type="entry name" value="ABC_transporter-like_ATP-bd"/>
</dbReference>
<dbReference type="InterPro" id="IPR017871">
    <property type="entry name" value="ABC_transporter-like_CS"/>
</dbReference>
<dbReference type="InterPro" id="IPR027417">
    <property type="entry name" value="P-loop_NTPase"/>
</dbReference>
<dbReference type="InterPro" id="IPR013283">
    <property type="entry name" value="RLI1"/>
</dbReference>
<dbReference type="InterPro" id="IPR034348">
    <property type="entry name" value="RLI_dom_1"/>
</dbReference>
<dbReference type="InterPro" id="IPR007209">
    <property type="entry name" value="RNaseL-inhib-like_metal-bd_dom"/>
</dbReference>
<dbReference type="NCBIfam" id="NF009945">
    <property type="entry name" value="PRK13409.1"/>
    <property type="match status" value="1"/>
</dbReference>
<dbReference type="PANTHER" id="PTHR19248">
    <property type="entry name" value="ATP-BINDING TRANSPORT PROTEIN-RELATED"/>
    <property type="match status" value="1"/>
</dbReference>
<dbReference type="Pfam" id="PF00005">
    <property type="entry name" value="ABC_tran"/>
    <property type="match status" value="2"/>
</dbReference>
<dbReference type="Pfam" id="PF00037">
    <property type="entry name" value="Fer4"/>
    <property type="match status" value="1"/>
</dbReference>
<dbReference type="Pfam" id="PF04068">
    <property type="entry name" value="Fer4_RLI"/>
    <property type="match status" value="1"/>
</dbReference>
<dbReference type="PRINTS" id="PR01868">
    <property type="entry name" value="ABCEFAMILY"/>
</dbReference>
<dbReference type="SMART" id="SM00382">
    <property type="entry name" value="AAA"/>
    <property type="match status" value="2"/>
</dbReference>
<dbReference type="SUPFAM" id="SSF54862">
    <property type="entry name" value="4Fe-4S ferredoxins"/>
    <property type="match status" value="1"/>
</dbReference>
<dbReference type="SUPFAM" id="SSF52540">
    <property type="entry name" value="P-loop containing nucleoside triphosphate hydrolases"/>
    <property type="match status" value="2"/>
</dbReference>
<dbReference type="PROSITE" id="PS00198">
    <property type="entry name" value="4FE4S_FER_1"/>
    <property type="match status" value="1"/>
</dbReference>
<dbReference type="PROSITE" id="PS51379">
    <property type="entry name" value="4FE4S_FER_2"/>
    <property type="match status" value="1"/>
</dbReference>
<dbReference type="PROSITE" id="PS00211">
    <property type="entry name" value="ABC_TRANSPORTER_1"/>
    <property type="match status" value="1"/>
</dbReference>
<dbReference type="PROSITE" id="PS50893">
    <property type="entry name" value="ABC_TRANSPORTER_2"/>
    <property type="match status" value="2"/>
</dbReference>
<accession>Q8LPJ4</accession>
<accession>O49679</accession>
<accession>Q56WZ4</accession>
<evidence type="ECO:0000255" key="1">
    <source>
        <dbReference type="PROSITE-ProRule" id="PRU00434"/>
    </source>
</evidence>
<evidence type="ECO:0000255" key="2">
    <source>
        <dbReference type="PROSITE-ProRule" id="PRU00711"/>
    </source>
</evidence>
<evidence type="ECO:0000269" key="3">
    <source>
    </source>
</evidence>
<evidence type="ECO:0000305" key="4"/>
<protein>
    <recommendedName>
        <fullName>ABC transporter E family member 2</fullName>
        <shortName>ABC transporter ABCE.2</shortName>
        <shortName>AtABCE2</shortName>
    </recommendedName>
    <alternativeName>
        <fullName>RNase L inhibitor-like protein 2</fullName>
        <shortName>AtRLI2</shortName>
        <shortName>AthaRLI2</shortName>
    </alternativeName>
</protein>
<gene>
    <name type="primary">ABCE2</name>
    <name type="synonym">RLI2</name>
    <name type="ordered locus">At4g19210</name>
    <name type="ORF">T18B16.180</name>
</gene>
<comment type="subcellular location">
    <subcellularLocation>
        <location evidence="4">Membrane</location>
    </subcellularLocation>
</comment>
<comment type="tissue specificity">
    <text evidence="3">Expressed in roots, stems, leaves, flowers and siliques.</text>
</comment>
<comment type="induction">
    <text evidence="3">In plants undergoing RNA interference.</text>
</comment>
<comment type="similarity">
    <text evidence="4">Belongs to the ABC transporter superfamily. ABCE family.</text>
</comment>
<comment type="sequence caution" evidence="4">
    <conflict type="erroneous gene model prediction">
        <sequence resource="EMBL-CDS" id="CAA16710"/>
    </conflict>
</comment>
<comment type="sequence caution" evidence="4">
    <conflict type="erroneous gene model prediction">
        <sequence resource="EMBL-CDS" id="CAB78923"/>
    </conflict>
</comment>
<keyword id="KW-0004">4Fe-4S</keyword>
<keyword id="KW-0067">ATP-binding</keyword>
<keyword id="KW-0408">Iron</keyword>
<keyword id="KW-0411">Iron-sulfur</keyword>
<keyword id="KW-0472">Membrane</keyword>
<keyword id="KW-0479">Metal-binding</keyword>
<keyword id="KW-0547">Nucleotide-binding</keyword>
<keyword id="KW-1185">Reference proteome</keyword>
<keyword id="KW-0677">Repeat</keyword>
<keyword id="KW-0813">Transport</keyword>
<organism>
    <name type="scientific">Arabidopsis thaliana</name>
    <name type="common">Mouse-ear cress</name>
    <dbReference type="NCBI Taxonomy" id="3702"/>
    <lineage>
        <taxon>Eukaryota</taxon>
        <taxon>Viridiplantae</taxon>
        <taxon>Streptophyta</taxon>
        <taxon>Embryophyta</taxon>
        <taxon>Tracheophyta</taxon>
        <taxon>Spermatophyta</taxon>
        <taxon>Magnoliopsida</taxon>
        <taxon>eudicotyledons</taxon>
        <taxon>Gunneridae</taxon>
        <taxon>Pentapetalae</taxon>
        <taxon>rosids</taxon>
        <taxon>malvids</taxon>
        <taxon>Brassicales</taxon>
        <taxon>Brassicaceae</taxon>
        <taxon>Camelineae</taxon>
        <taxon>Arabidopsis</taxon>
    </lineage>
</organism>
<name>AB2E_ARATH</name>
<sequence>MADRLTRIAIVSSDRCKPKKCRQECKKSCPVVKTGKLCIEVTVGSKLAFISEELCIGCGICVKKCPFEAIQIINLPRDLEKDTTHRYGANTFKLHRLPVPRPGQVLGLVGTNGIGKSTALKILAGKLKPNLGRFTSPPDWQEILTHFRGSELQNYFTRILEDNLKAIIKPQYVDHIPRAVKGNVGEVLDQKDERDKKAELCADLELNQVIDRDVENLSGGELQRFAIAVVAIQNAEIYMFDEPSSYLDVKQRLKAAQVVRSLLRPNSYVIVVEHDLSVLDYLSDFICCLYGKPGAYGVVTLPFSVREGINIFLAGFVPTENLRFRDESLTFKVAETPQESAEEIQSYARYKYPTMTKTQGNFRLRVSEGEFTDSQIIVMLGENGTGKTTFIRMLAGLLKPDDTEGPDREIPEFNVSYKPQKISPKFQNSVRHLLHQKIRDSYMHPQFMSDVMKPLQIEQLMDQEVVNLSGGELQRVALTLCLGKPADIYLIDEPSAYLDSEQRIVASKVIKRFILHAKKTAFVVEHDFIMATYLADRVIVYEGQPSIDCTANCPQSLLSGMNLFLSHLNITFRRDPTNFRPRINKLESTKDREQKSAGSYYYLDD</sequence>